<gene>
    <name type="primary">RASGEF1B</name>
</gene>
<protein>
    <recommendedName>
        <fullName>Ras-GEF domain-containing family member 1B</fullName>
    </recommendedName>
</protein>
<feature type="chain" id="PRO_0000297637" description="Ras-GEF domain-containing family member 1B">
    <location>
        <begin position="1"/>
        <end position="472"/>
    </location>
</feature>
<feature type="domain" description="N-terminal Ras-GEF" evidence="2">
    <location>
        <begin position="34"/>
        <end position="164"/>
    </location>
</feature>
<feature type="domain" description="Ras-GEF" evidence="3">
    <location>
        <begin position="204"/>
        <end position="452"/>
    </location>
</feature>
<organism>
    <name type="scientific">Bos taurus</name>
    <name type="common">Bovine</name>
    <dbReference type="NCBI Taxonomy" id="9913"/>
    <lineage>
        <taxon>Eukaryota</taxon>
        <taxon>Metazoa</taxon>
        <taxon>Chordata</taxon>
        <taxon>Craniata</taxon>
        <taxon>Vertebrata</taxon>
        <taxon>Euteleostomi</taxon>
        <taxon>Mammalia</taxon>
        <taxon>Eutheria</taxon>
        <taxon>Laurasiatheria</taxon>
        <taxon>Artiodactyla</taxon>
        <taxon>Ruminantia</taxon>
        <taxon>Pecora</taxon>
        <taxon>Bovidae</taxon>
        <taxon>Bovinae</taxon>
        <taxon>Bos</taxon>
    </lineage>
</organism>
<evidence type="ECO:0000250" key="1"/>
<evidence type="ECO:0000255" key="2">
    <source>
        <dbReference type="PROSITE-ProRule" id="PRU00135"/>
    </source>
</evidence>
<evidence type="ECO:0000255" key="3">
    <source>
        <dbReference type="PROSITE-ProRule" id="PRU00168"/>
    </source>
</evidence>
<keyword id="KW-0967">Endosome</keyword>
<keyword id="KW-0344">Guanine-nucleotide releasing factor</keyword>
<keyword id="KW-1185">Reference proteome</keyword>
<accession>A4IFE4</accession>
<proteinExistence type="evidence at transcript level"/>
<dbReference type="EMBL" id="BC134542">
    <property type="protein sequence ID" value="AAI34543.1"/>
    <property type="molecule type" value="mRNA"/>
</dbReference>
<dbReference type="RefSeq" id="NP_001077118.1">
    <property type="nucleotide sequence ID" value="NM_001083649.1"/>
</dbReference>
<dbReference type="SMR" id="A4IFE4"/>
<dbReference type="FunCoup" id="A4IFE4">
    <property type="interactions" value="663"/>
</dbReference>
<dbReference type="STRING" id="9913.ENSBTAP00000042728"/>
<dbReference type="PaxDb" id="9913-ENSBTAP00000042728"/>
<dbReference type="GeneID" id="506971"/>
<dbReference type="KEGG" id="bta:506971"/>
<dbReference type="CTD" id="153020"/>
<dbReference type="VEuPathDB" id="HostDB:ENSBTAG00000006561"/>
<dbReference type="eggNOG" id="KOG3417">
    <property type="taxonomic scope" value="Eukaryota"/>
</dbReference>
<dbReference type="eggNOG" id="KOG3541">
    <property type="taxonomic scope" value="Eukaryota"/>
</dbReference>
<dbReference type="HOGENOM" id="CLU_022907_3_0_1"/>
<dbReference type="InParanoid" id="A4IFE4"/>
<dbReference type="OMA" id="TWAKVQS"/>
<dbReference type="OrthoDB" id="20825at2759"/>
<dbReference type="TreeFam" id="TF313379"/>
<dbReference type="Proteomes" id="UP000009136">
    <property type="component" value="Chromosome 6"/>
</dbReference>
<dbReference type="Bgee" id="ENSBTAG00000006561">
    <property type="expression patterns" value="Expressed in bone marrow and 101 other cell types or tissues"/>
</dbReference>
<dbReference type="GO" id="GO:0005769">
    <property type="term" value="C:early endosome"/>
    <property type="evidence" value="ECO:0007669"/>
    <property type="project" value="UniProtKB-SubCell"/>
</dbReference>
<dbReference type="GO" id="GO:0005770">
    <property type="term" value="C:late endosome"/>
    <property type="evidence" value="ECO:0007669"/>
    <property type="project" value="UniProtKB-SubCell"/>
</dbReference>
<dbReference type="GO" id="GO:0030496">
    <property type="term" value="C:midbody"/>
    <property type="evidence" value="ECO:0007669"/>
    <property type="project" value="UniProtKB-SubCell"/>
</dbReference>
<dbReference type="GO" id="GO:0005886">
    <property type="term" value="C:plasma membrane"/>
    <property type="evidence" value="ECO:0000318"/>
    <property type="project" value="GO_Central"/>
</dbReference>
<dbReference type="GO" id="GO:0005085">
    <property type="term" value="F:guanyl-nucleotide exchange factor activity"/>
    <property type="evidence" value="ECO:0000250"/>
    <property type="project" value="UniProtKB"/>
</dbReference>
<dbReference type="GO" id="GO:0007265">
    <property type="term" value="P:Ras protein signal transduction"/>
    <property type="evidence" value="ECO:0000318"/>
    <property type="project" value="GO_Central"/>
</dbReference>
<dbReference type="CDD" id="cd00155">
    <property type="entry name" value="RasGEF"/>
    <property type="match status" value="1"/>
</dbReference>
<dbReference type="CDD" id="cd06224">
    <property type="entry name" value="REM"/>
    <property type="match status" value="1"/>
</dbReference>
<dbReference type="FunFam" id="1.10.840.10:FF:000008">
    <property type="entry name" value="Ras-GEF domain-containing family member 1B"/>
    <property type="match status" value="1"/>
</dbReference>
<dbReference type="FunFam" id="1.20.870.10:FF:000007">
    <property type="entry name" value="Ras-GEF domain-containing family member 1B"/>
    <property type="match status" value="1"/>
</dbReference>
<dbReference type="Gene3D" id="1.10.840.10">
    <property type="entry name" value="Ras guanine-nucleotide exchange factors catalytic domain"/>
    <property type="match status" value="1"/>
</dbReference>
<dbReference type="Gene3D" id="1.20.870.10">
    <property type="entry name" value="Son of sevenless (SoS) protein Chain: S domain 1"/>
    <property type="match status" value="1"/>
</dbReference>
<dbReference type="InterPro" id="IPR008937">
    <property type="entry name" value="Ras-like_GEF"/>
</dbReference>
<dbReference type="InterPro" id="IPR000651">
    <property type="entry name" value="Ras-like_Gua-exchang_fac_N"/>
</dbReference>
<dbReference type="InterPro" id="IPR019804">
    <property type="entry name" value="Ras_G-nucl-exch_fac_CS"/>
</dbReference>
<dbReference type="InterPro" id="IPR023578">
    <property type="entry name" value="Ras_GEF_dom_sf"/>
</dbReference>
<dbReference type="InterPro" id="IPR001895">
    <property type="entry name" value="RASGEF_cat_dom"/>
</dbReference>
<dbReference type="InterPro" id="IPR036964">
    <property type="entry name" value="RASGEF_cat_dom_sf"/>
</dbReference>
<dbReference type="PANTHER" id="PTHR23113">
    <property type="entry name" value="GUANINE NUCLEOTIDE EXCHANGE FACTOR"/>
    <property type="match status" value="1"/>
</dbReference>
<dbReference type="PANTHER" id="PTHR23113:SF197">
    <property type="entry name" value="RAS-GEF DOMAIN-CONTAINING FAMILY MEMBER 1B"/>
    <property type="match status" value="1"/>
</dbReference>
<dbReference type="Pfam" id="PF00617">
    <property type="entry name" value="RasGEF"/>
    <property type="match status" value="1"/>
</dbReference>
<dbReference type="Pfam" id="PF00618">
    <property type="entry name" value="RasGEF_N"/>
    <property type="match status" value="1"/>
</dbReference>
<dbReference type="SMART" id="SM00147">
    <property type="entry name" value="RasGEF"/>
    <property type="match status" value="1"/>
</dbReference>
<dbReference type="SMART" id="SM00229">
    <property type="entry name" value="RasGEFN"/>
    <property type="match status" value="1"/>
</dbReference>
<dbReference type="SUPFAM" id="SSF48366">
    <property type="entry name" value="Ras GEF"/>
    <property type="match status" value="1"/>
</dbReference>
<dbReference type="PROSITE" id="PS00720">
    <property type="entry name" value="RASGEF"/>
    <property type="match status" value="1"/>
</dbReference>
<dbReference type="PROSITE" id="PS50009">
    <property type="entry name" value="RASGEF_CAT"/>
    <property type="match status" value="1"/>
</dbReference>
<dbReference type="PROSITE" id="PS50212">
    <property type="entry name" value="RASGEF_NTER"/>
    <property type="match status" value="1"/>
</dbReference>
<comment type="function">
    <text evidence="1">Guanine nucleotide exchange factor (GEF) with specificity for RAP2A, it doesn't seems to activate other Ras family proteins (in vitro).</text>
</comment>
<comment type="subunit">
    <text evidence="1">Interacts with CCDC124 during cytokinesis. Interacts with Ras family proteins (By similarity).</text>
</comment>
<comment type="subcellular location">
    <subcellularLocation>
        <location evidence="1">Early endosome</location>
    </subcellularLocation>
    <subcellularLocation>
        <location evidence="1">Late endosome</location>
    </subcellularLocation>
    <subcellularLocation>
        <location evidence="1">Midbody</location>
    </subcellularLocation>
    <text evidence="1">Localizes to midbody at telophase (By similarity). May shuttle between early and late endosomes. Does not colocalize with lysosomal markers (By similarity).</text>
</comment>
<name>RGF1B_BOVIN</name>
<reference key="1">
    <citation type="submission" date="2007-03" db="EMBL/GenBank/DDBJ databases">
        <authorList>
            <consortium name="NIH - Mammalian Gene Collection (MGC) project"/>
        </authorList>
    </citation>
    <scope>NUCLEOTIDE SEQUENCE [LARGE SCALE MRNA]</scope>
    <source>
        <strain>Hereford</strain>
        <tissue>Thalamus</tissue>
    </source>
</reference>
<sequence>MPQTPPFSAMFDSSGYNRNLYQSAEDSCGGLYYHDNNLLSGSLEALIQHLVPNVDYYPDRTYIFTFLLSSRLFMHPYELMAKVCHLCVEHQRLSDPNSDKNQIRKIAPKILQLLTEWTETFPYDFRDERMMRNLKDLAHRIASGEETYRKNVQQMIQCLIRKLAALSQYEEVLAKISSTSTDRLTVLKTKPQSIQRDIITVCSDPYTLAQQLTHIELERLNYIGPEEFVQAFVQKDPLDNDKSCYSERKKTRNLEAYVEWFNRLSYLVATEICMPVKKKHRARMIEYFIDVARECFNIGNFNSLMAIISGMNMSPVSRLKKTWAKVKTAKFDVLEHQMDPSSNFYNYRTALRGAAQRSLTAHSSREKIVIPFFSLLIKDIYFLNEGCANRLPNGHVNFEKFWELAKQVSEFMTWKQVECPFERDRKILQHLLTVPVFSEDALYLASYESEGPENHIEKDRWKSLRSSLLGRV</sequence>